<proteinExistence type="inferred from homology"/>
<name>RBFA_NEIG1</name>
<feature type="chain" id="PRO_1000000151" description="Ribosome-binding factor A">
    <location>
        <begin position="1"/>
        <end position="123"/>
    </location>
</feature>
<accession>Q5F8W6</accession>
<evidence type="ECO:0000255" key="1">
    <source>
        <dbReference type="HAMAP-Rule" id="MF_00003"/>
    </source>
</evidence>
<comment type="function">
    <text evidence="1">One of several proteins that assist in the late maturation steps of the functional core of the 30S ribosomal subunit. Associates with free 30S ribosomal subunits (but not with 30S subunits that are part of 70S ribosomes or polysomes). Required for efficient processing of 16S rRNA. May interact with the 5'-terminal helix region of 16S rRNA.</text>
</comment>
<comment type="subunit">
    <text evidence="1">Monomer. Binds 30S ribosomal subunits, but not 50S ribosomal subunits or 70S ribosomes.</text>
</comment>
<comment type="subcellular location">
    <subcellularLocation>
        <location evidence="1">Cytoplasm</location>
    </subcellularLocation>
</comment>
<comment type="similarity">
    <text evidence="1">Belongs to the RbfA family.</text>
</comment>
<sequence>MKKPQRGYARQDRVKEQIMRELAELVRTGLKDPRAGFITINEVEITRDYSHATVFYTVLNQDTREITEEVLEHARGHLRSELSKRIKLFKIPELHFKYDESLERGMSLSALIDQVAAEKPVED</sequence>
<organism>
    <name type="scientific">Neisseria gonorrhoeae (strain ATCC 700825 / FA 1090)</name>
    <dbReference type="NCBI Taxonomy" id="242231"/>
    <lineage>
        <taxon>Bacteria</taxon>
        <taxon>Pseudomonadati</taxon>
        <taxon>Pseudomonadota</taxon>
        <taxon>Betaproteobacteria</taxon>
        <taxon>Neisseriales</taxon>
        <taxon>Neisseriaceae</taxon>
        <taxon>Neisseria</taxon>
    </lineage>
</organism>
<gene>
    <name evidence="1" type="primary">rbfA</name>
    <name type="ordered locus">NGO_0644</name>
</gene>
<protein>
    <recommendedName>
        <fullName evidence="1">Ribosome-binding factor A</fullName>
    </recommendedName>
</protein>
<dbReference type="EMBL" id="AE004969">
    <property type="protein sequence ID" value="AAW89371.1"/>
    <property type="molecule type" value="Genomic_DNA"/>
</dbReference>
<dbReference type="RefSeq" id="WP_010951100.1">
    <property type="nucleotide sequence ID" value="NC_002946.2"/>
</dbReference>
<dbReference type="RefSeq" id="YP_207783.1">
    <property type="nucleotide sequence ID" value="NC_002946.2"/>
</dbReference>
<dbReference type="SMR" id="Q5F8W6"/>
<dbReference type="STRING" id="242231.NGO_0644"/>
<dbReference type="KEGG" id="ngo:NGO_0644"/>
<dbReference type="PATRIC" id="fig|242231.10.peg.758"/>
<dbReference type="HOGENOM" id="CLU_089475_5_0_4"/>
<dbReference type="Proteomes" id="UP000000535">
    <property type="component" value="Chromosome"/>
</dbReference>
<dbReference type="GO" id="GO:0005829">
    <property type="term" value="C:cytosol"/>
    <property type="evidence" value="ECO:0007669"/>
    <property type="project" value="TreeGrafter"/>
</dbReference>
<dbReference type="GO" id="GO:0043024">
    <property type="term" value="F:ribosomal small subunit binding"/>
    <property type="evidence" value="ECO:0007669"/>
    <property type="project" value="TreeGrafter"/>
</dbReference>
<dbReference type="GO" id="GO:0030490">
    <property type="term" value="P:maturation of SSU-rRNA"/>
    <property type="evidence" value="ECO:0007669"/>
    <property type="project" value="UniProtKB-UniRule"/>
</dbReference>
<dbReference type="FunFam" id="3.30.300.20:FF:000019">
    <property type="entry name" value="Ribosome-binding factor A"/>
    <property type="match status" value="1"/>
</dbReference>
<dbReference type="Gene3D" id="3.30.300.20">
    <property type="match status" value="1"/>
</dbReference>
<dbReference type="HAMAP" id="MF_00003">
    <property type="entry name" value="RbfA"/>
    <property type="match status" value="1"/>
</dbReference>
<dbReference type="InterPro" id="IPR015946">
    <property type="entry name" value="KH_dom-like_a/b"/>
</dbReference>
<dbReference type="InterPro" id="IPR000238">
    <property type="entry name" value="RbfA"/>
</dbReference>
<dbReference type="InterPro" id="IPR023799">
    <property type="entry name" value="RbfA_dom_sf"/>
</dbReference>
<dbReference type="InterPro" id="IPR020053">
    <property type="entry name" value="Ribosome-bd_factorA_CS"/>
</dbReference>
<dbReference type="NCBIfam" id="TIGR00082">
    <property type="entry name" value="rbfA"/>
    <property type="match status" value="1"/>
</dbReference>
<dbReference type="PANTHER" id="PTHR33515">
    <property type="entry name" value="RIBOSOME-BINDING FACTOR A, CHLOROPLASTIC-RELATED"/>
    <property type="match status" value="1"/>
</dbReference>
<dbReference type="PANTHER" id="PTHR33515:SF1">
    <property type="entry name" value="RIBOSOME-BINDING FACTOR A, CHLOROPLASTIC-RELATED"/>
    <property type="match status" value="1"/>
</dbReference>
<dbReference type="Pfam" id="PF02033">
    <property type="entry name" value="RBFA"/>
    <property type="match status" value="1"/>
</dbReference>
<dbReference type="SUPFAM" id="SSF89919">
    <property type="entry name" value="Ribosome-binding factor A, RbfA"/>
    <property type="match status" value="1"/>
</dbReference>
<dbReference type="PROSITE" id="PS01319">
    <property type="entry name" value="RBFA"/>
    <property type="match status" value="1"/>
</dbReference>
<reference key="1">
    <citation type="submission" date="2003-03" db="EMBL/GenBank/DDBJ databases">
        <title>The complete genome sequence of Neisseria gonorrhoeae.</title>
        <authorList>
            <person name="Lewis L.A."/>
            <person name="Gillaspy A.F."/>
            <person name="McLaughlin R.E."/>
            <person name="Gipson M."/>
            <person name="Ducey T.F."/>
            <person name="Ownbey T."/>
            <person name="Hartman K."/>
            <person name="Nydick C."/>
            <person name="Carson M.B."/>
            <person name="Vaughn J."/>
            <person name="Thomson C."/>
            <person name="Song L."/>
            <person name="Lin S."/>
            <person name="Yuan X."/>
            <person name="Najar F."/>
            <person name="Zhan M."/>
            <person name="Ren Q."/>
            <person name="Zhu H."/>
            <person name="Qi S."/>
            <person name="Kenton S.M."/>
            <person name="Lai H."/>
            <person name="White J.D."/>
            <person name="Clifton S."/>
            <person name="Roe B.A."/>
            <person name="Dyer D.W."/>
        </authorList>
    </citation>
    <scope>NUCLEOTIDE SEQUENCE [LARGE SCALE GENOMIC DNA]</scope>
    <source>
        <strain>ATCC 700825 / FA 1090</strain>
    </source>
</reference>
<keyword id="KW-0963">Cytoplasm</keyword>
<keyword id="KW-1185">Reference proteome</keyword>
<keyword id="KW-0690">Ribosome biogenesis</keyword>